<reference key="1">
    <citation type="journal article" date="2009" name="PLoS ONE">
        <title>Complete genome sequence of Francisella tularensis subspecies holarctica FTNF002-00.</title>
        <authorList>
            <person name="Barabote R.D."/>
            <person name="Xie G."/>
            <person name="Brettin T.S."/>
            <person name="Hinrichs S.H."/>
            <person name="Fey P.D."/>
            <person name="Jay J.J."/>
            <person name="Engle J.L."/>
            <person name="Godbole S.D."/>
            <person name="Noronha J.M."/>
            <person name="Scheuermann R.H."/>
            <person name="Zhou L.W."/>
            <person name="Lion C."/>
            <person name="Dempsey M.P."/>
        </authorList>
    </citation>
    <scope>NUCLEOTIDE SEQUENCE [LARGE SCALE GENOMIC DNA]</scope>
    <source>
        <strain>FTNF002-00 / FTA</strain>
    </source>
</reference>
<feature type="chain" id="PRO_1000014582" description="Small ribosomal subunit protein bS20">
    <location>
        <begin position="1"/>
        <end position="90"/>
    </location>
</feature>
<protein>
    <recommendedName>
        <fullName evidence="1">Small ribosomal subunit protein bS20</fullName>
    </recommendedName>
    <alternativeName>
        <fullName evidence="2">30S ribosomal protein S20</fullName>
    </alternativeName>
</protein>
<accession>A7N9A3</accession>
<name>RS20_FRATF</name>
<keyword id="KW-0687">Ribonucleoprotein</keyword>
<keyword id="KW-0689">Ribosomal protein</keyword>
<keyword id="KW-0694">RNA-binding</keyword>
<keyword id="KW-0699">rRNA-binding</keyword>
<proteinExistence type="inferred from homology"/>
<sequence>MANSKQAKKRIIQAERNRQHNVARRSMMRTFLKKTAYAIEKGDVEAAKENFTKVVPILDKYASKGLIHKNKAARHKSRLSAKIKALATAA</sequence>
<evidence type="ECO:0000255" key="1">
    <source>
        <dbReference type="HAMAP-Rule" id="MF_00500"/>
    </source>
</evidence>
<evidence type="ECO:0000305" key="2"/>
<organism>
    <name type="scientific">Francisella tularensis subsp. holarctica (strain FTNF002-00 / FTA)</name>
    <dbReference type="NCBI Taxonomy" id="458234"/>
    <lineage>
        <taxon>Bacteria</taxon>
        <taxon>Pseudomonadati</taxon>
        <taxon>Pseudomonadota</taxon>
        <taxon>Gammaproteobacteria</taxon>
        <taxon>Thiotrichales</taxon>
        <taxon>Francisellaceae</taxon>
        <taxon>Francisella</taxon>
    </lineage>
</organism>
<comment type="function">
    <text evidence="1">Binds directly to 16S ribosomal RNA.</text>
</comment>
<comment type="similarity">
    <text evidence="1">Belongs to the bacterial ribosomal protein bS20 family.</text>
</comment>
<gene>
    <name evidence="1" type="primary">rpsT</name>
    <name type="ordered locus">FTA_0078</name>
</gene>
<dbReference type="EMBL" id="CP000803">
    <property type="protein sequence ID" value="ABU60556.1"/>
    <property type="molecule type" value="Genomic_DNA"/>
</dbReference>
<dbReference type="RefSeq" id="WP_003014020.1">
    <property type="nucleotide sequence ID" value="NC_009749.1"/>
</dbReference>
<dbReference type="SMR" id="A7N9A3"/>
<dbReference type="KEGG" id="fta:FTA_0078"/>
<dbReference type="HOGENOM" id="CLU_160655_4_0_6"/>
<dbReference type="GO" id="GO:0005829">
    <property type="term" value="C:cytosol"/>
    <property type="evidence" value="ECO:0007669"/>
    <property type="project" value="TreeGrafter"/>
</dbReference>
<dbReference type="GO" id="GO:0015935">
    <property type="term" value="C:small ribosomal subunit"/>
    <property type="evidence" value="ECO:0007669"/>
    <property type="project" value="TreeGrafter"/>
</dbReference>
<dbReference type="GO" id="GO:0070181">
    <property type="term" value="F:small ribosomal subunit rRNA binding"/>
    <property type="evidence" value="ECO:0007669"/>
    <property type="project" value="TreeGrafter"/>
</dbReference>
<dbReference type="GO" id="GO:0003735">
    <property type="term" value="F:structural constituent of ribosome"/>
    <property type="evidence" value="ECO:0007669"/>
    <property type="project" value="InterPro"/>
</dbReference>
<dbReference type="GO" id="GO:0006412">
    <property type="term" value="P:translation"/>
    <property type="evidence" value="ECO:0007669"/>
    <property type="project" value="UniProtKB-UniRule"/>
</dbReference>
<dbReference type="FunFam" id="1.20.58.110:FF:000001">
    <property type="entry name" value="30S ribosomal protein S20"/>
    <property type="match status" value="1"/>
</dbReference>
<dbReference type="Gene3D" id="1.20.58.110">
    <property type="entry name" value="Ribosomal protein S20"/>
    <property type="match status" value="1"/>
</dbReference>
<dbReference type="HAMAP" id="MF_00500">
    <property type="entry name" value="Ribosomal_bS20"/>
    <property type="match status" value="1"/>
</dbReference>
<dbReference type="InterPro" id="IPR002583">
    <property type="entry name" value="Ribosomal_bS20"/>
</dbReference>
<dbReference type="InterPro" id="IPR036510">
    <property type="entry name" value="Ribosomal_bS20_sf"/>
</dbReference>
<dbReference type="NCBIfam" id="TIGR00029">
    <property type="entry name" value="S20"/>
    <property type="match status" value="1"/>
</dbReference>
<dbReference type="PANTHER" id="PTHR33398">
    <property type="entry name" value="30S RIBOSOMAL PROTEIN S20"/>
    <property type="match status" value="1"/>
</dbReference>
<dbReference type="PANTHER" id="PTHR33398:SF1">
    <property type="entry name" value="SMALL RIBOSOMAL SUBUNIT PROTEIN BS20C"/>
    <property type="match status" value="1"/>
</dbReference>
<dbReference type="Pfam" id="PF01649">
    <property type="entry name" value="Ribosomal_S20p"/>
    <property type="match status" value="1"/>
</dbReference>
<dbReference type="SUPFAM" id="SSF46992">
    <property type="entry name" value="Ribosomal protein S20"/>
    <property type="match status" value="1"/>
</dbReference>